<comment type="function">
    <text evidence="1">Regulates expression of PIS1.</text>
</comment>
<comment type="subunit">
    <text evidence="2">Interacts with SPO1 in meiosis.</text>
</comment>
<comment type="disruption phenotype">
    <text evidence="2">Has a moderate sporulation defect.</text>
</comment>
<name>SPO23_YEAST</name>
<proteinExistence type="evidence at protein level"/>
<organism>
    <name type="scientific">Saccharomyces cerevisiae (strain ATCC 204508 / S288c)</name>
    <name type="common">Baker's yeast</name>
    <dbReference type="NCBI Taxonomy" id="559292"/>
    <lineage>
        <taxon>Eukaryota</taxon>
        <taxon>Fungi</taxon>
        <taxon>Dikarya</taxon>
        <taxon>Ascomycota</taxon>
        <taxon>Saccharomycotina</taxon>
        <taxon>Saccharomycetes</taxon>
        <taxon>Saccharomycetales</taxon>
        <taxon>Saccharomycetaceae</taxon>
        <taxon>Saccharomyces</taxon>
    </lineage>
</organism>
<accession>P33757</accession>
<accession>D6VQP6</accession>
<evidence type="ECO:0000269" key="1">
    <source>
    </source>
</evidence>
<evidence type="ECO:0000269" key="2">
    <source>
    </source>
</evidence>
<gene>
    <name type="primary">SPO23</name>
    <name type="ordered locus">YBR250W</name>
    <name type="ORF">YBR1702</name>
</gene>
<dbReference type="EMBL" id="L20296">
    <property type="protein sequence ID" value="AAA65608.1"/>
    <property type="molecule type" value="Genomic_DNA"/>
</dbReference>
<dbReference type="EMBL" id="Z36119">
    <property type="protein sequence ID" value="CAA85213.1"/>
    <property type="molecule type" value="Genomic_DNA"/>
</dbReference>
<dbReference type="EMBL" id="BK006936">
    <property type="protein sequence ID" value="DAA07366.1"/>
    <property type="molecule type" value="Genomic_DNA"/>
</dbReference>
<dbReference type="PIR" id="S38186">
    <property type="entry name" value="S38186"/>
</dbReference>
<dbReference type="RefSeq" id="NP_009809.1">
    <property type="nucleotide sequence ID" value="NM_001178598.1"/>
</dbReference>
<dbReference type="BioGRID" id="32945">
    <property type="interactions" value="64"/>
</dbReference>
<dbReference type="DIP" id="DIP-1651N"/>
<dbReference type="FunCoup" id="P33757">
    <property type="interactions" value="45"/>
</dbReference>
<dbReference type="IntAct" id="P33757">
    <property type="interactions" value="5"/>
</dbReference>
<dbReference type="MINT" id="P33757"/>
<dbReference type="STRING" id="4932.YBR250W"/>
<dbReference type="PaxDb" id="4932-YBR250W"/>
<dbReference type="PeptideAtlas" id="P33757"/>
<dbReference type="EnsemblFungi" id="YBR250W_mRNA">
    <property type="protein sequence ID" value="YBR250W"/>
    <property type="gene ID" value="YBR250W"/>
</dbReference>
<dbReference type="GeneID" id="852552"/>
<dbReference type="KEGG" id="sce:YBR250W"/>
<dbReference type="AGR" id="SGD:S000000454"/>
<dbReference type="SGD" id="S000000454">
    <property type="gene designation" value="SPO23"/>
</dbReference>
<dbReference type="VEuPathDB" id="FungiDB:YBR250W"/>
<dbReference type="eggNOG" id="ENOG502S0PG">
    <property type="taxonomic scope" value="Eukaryota"/>
</dbReference>
<dbReference type="HOGENOM" id="CLU_038191_0_0_1"/>
<dbReference type="InParanoid" id="P33757"/>
<dbReference type="OMA" id="HFRIESL"/>
<dbReference type="OrthoDB" id="4061472at2759"/>
<dbReference type="BioCyc" id="YEAST:G3O-29176-MONOMER"/>
<dbReference type="BioGRID-ORCS" id="852552">
    <property type="hits" value="0 hits in 10 CRISPR screens"/>
</dbReference>
<dbReference type="PRO" id="PR:P33757"/>
<dbReference type="Proteomes" id="UP000002311">
    <property type="component" value="Chromosome II"/>
</dbReference>
<dbReference type="RNAct" id="P33757">
    <property type="molecule type" value="protein"/>
</dbReference>
<dbReference type="GO" id="GO:0051321">
    <property type="term" value="P:meiotic cell cycle"/>
    <property type="evidence" value="ECO:0000315"/>
    <property type="project" value="SGD"/>
</dbReference>
<dbReference type="GO" id="GO:0030435">
    <property type="term" value="P:sporulation resulting in formation of a cellular spore"/>
    <property type="evidence" value="ECO:0007669"/>
    <property type="project" value="UniProtKB-KW"/>
</dbReference>
<dbReference type="Gene3D" id="2.60.40.640">
    <property type="match status" value="1"/>
</dbReference>
<dbReference type="InterPro" id="IPR014752">
    <property type="entry name" value="Arrestin-like_C"/>
</dbReference>
<dbReference type="InterPro" id="IPR011021">
    <property type="entry name" value="Arrestin-like_N"/>
</dbReference>
<dbReference type="Pfam" id="PF00339">
    <property type="entry name" value="Arrestin_N"/>
    <property type="match status" value="1"/>
</dbReference>
<reference key="1">
    <citation type="journal article" date="1993" name="Yeast">
        <title>The complete sequence of a 6794 bp segment located on the right arm of chromosome II of Saccharomyces cerevisiae. Finding of a putative dUTPase in a yeast.</title>
        <authorList>
            <person name="Doignon F."/>
            <person name="Biteau N."/>
            <person name="Aigle M."/>
            <person name="Crouzet M."/>
        </authorList>
    </citation>
    <scope>NUCLEOTIDE SEQUENCE [GENOMIC DNA]</scope>
    <source>
        <strain>ATCC 204508 / S288c</strain>
    </source>
</reference>
<reference key="2">
    <citation type="journal article" date="1994" name="EMBO J.">
        <title>Complete DNA sequence of yeast chromosome II.</title>
        <authorList>
            <person name="Feldmann H."/>
            <person name="Aigle M."/>
            <person name="Aljinovic G."/>
            <person name="Andre B."/>
            <person name="Baclet M.C."/>
            <person name="Barthe C."/>
            <person name="Baur A."/>
            <person name="Becam A.-M."/>
            <person name="Biteau N."/>
            <person name="Boles E."/>
            <person name="Brandt T."/>
            <person name="Brendel M."/>
            <person name="Brueckner M."/>
            <person name="Bussereau F."/>
            <person name="Christiansen C."/>
            <person name="Contreras R."/>
            <person name="Crouzet M."/>
            <person name="Cziepluch C."/>
            <person name="Demolis N."/>
            <person name="Delaveau T."/>
            <person name="Doignon F."/>
            <person name="Domdey H."/>
            <person name="Duesterhus S."/>
            <person name="Dubois E."/>
            <person name="Dujon B."/>
            <person name="El Bakkoury M."/>
            <person name="Entian K.-D."/>
            <person name="Feuermann M."/>
            <person name="Fiers W."/>
            <person name="Fobo G.M."/>
            <person name="Fritz C."/>
            <person name="Gassenhuber J."/>
            <person name="Glansdorff N."/>
            <person name="Goffeau A."/>
            <person name="Grivell L.A."/>
            <person name="de Haan M."/>
            <person name="Hein C."/>
            <person name="Herbert C.J."/>
            <person name="Hollenberg C.P."/>
            <person name="Holmstroem K."/>
            <person name="Jacq C."/>
            <person name="Jacquet M."/>
            <person name="Jauniaux J.-C."/>
            <person name="Jonniaux J.-L."/>
            <person name="Kallesoee T."/>
            <person name="Kiesau P."/>
            <person name="Kirchrath L."/>
            <person name="Koetter P."/>
            <person name="Korol S."/>
            <person name="Liebl S."/>
            <person name="Logghe M."/>
            <person name="Lohan A.J.E."/>
            <person name="Louis E.J."/>
            <person name="Li Z.Y."/>
            <person name="Maat M.J."/>
            <person name="Mallet L."/>
            <person name="Mannhaupt G."/>
            <person name="Messenguy F."/>
            <person name="Miosga T."/>
            <person name="Molemans F."/>
            <person name="Mueller S."/>
            <person name="Nasr F."/>
            <person name="Obermaier B."/>
            <person name="Perea J."/>
            <person name="Pierard A."/>
            <person name="Piravandi E."/>
            <person name="Pohl F.M."/>
            <person name="Pohl T.M."/>
            <person name="Potier S."/>
            <person name="Proft M."/>
            <person name="Purnelle B."/>
            <person name="Ramezani Rad M."/>
            <person name="Rieger M."/>
            <person name="Rose M."/>
            <person name="Schaaff-Gerstenschlaeger I."/>
            <person name="Scherens B."/>
            <person name="Schwarzlose C."/>
            <person name="Skala J."/>
            <person name="Slonimski P.P."/>
            <person name="Smits P.H.M."/>
            <person name="Souciet J.-L."/>
            <person name="Steensma H.Y."/>
            <person name="Stucka R."/>
            <person name="Urrestarazu L.A."/>
            <person name="van der Aart Q.J.M."/>
            <person name="Van Dyck L."/>
            <person name="Vassarotti A."/>
            <person name="Vetter I."/>
            <person name="Vierendeels F."/>
            <person name="Vissers S."/>
            <person name="Wagner G."/>
            <person name="de Wergifosse P."/>
            <person name="Wolfe K.H."/>
            <person name="Zagulski M."/>
            <person name="Zimmermann F.K."/>
            <person name="Mewes H.-W."/>
            <person name="Kleine K."/>
        </authorList>
    </citation>
    <scope>NUCLEOTIDE SEQUENCE [LARGE SCALE GENOMIC DNA]</scope>
    <source>
        <strain>ATCC 204508 / S288c</strain>
    </source>
</reference>
<reference key="3">
    <citation type="journal article" date="2014" name="G3 (Bethesda)">
        <title>The reference genome sequence of Saccharomyces cerevisiae: Then and now.</title>
        <authorList>
            <person name="Engel S.R."/>
            <person name="Dietrich F.S."/>
            <person name="Fisk D.G."/>
            <person name="Binkley G."/>
            <person name="Balakrishnan R."/>
            <person name="Costanzo M.C."/>
            <person name="Dwight S.S."/>
            <person name="Hitz B.C."/>
            <person name="Karra K."/>
            <person name="Nash R.S."/>
            <person name="Weng S."/>
            <person name="Wong E.D."/>
            <person name="Lloyd P."/>
            <person name="Skrzypek M.S."/>
            <person name="Miyasato S.R."/>
            <person name="Simison M."/>
            <person name="Cherry J.M."/>
        </authorList>
    </citation>
    <scope>GENOME REANNOTATION</scope>
    <source>
        <strain>ATCC 204508 / S288c</strain>
    </source>
</reference>
<reference key="4">
    <citation type="journal article" date="2005" name="Eukaryot. Cell">
        <title>Genomic analysis of PIS1 gene expression.</title>
        <authorList>
            <person name="Gardocki M.E."/>
            <person name="Bakewell M."/>
            <person name="Kamath D."/>
            <person name="Robinson K."/>
            <person name="Borovicka K."/>
            <person name="Lopes J.M."/>
        </authorList>
    </citation>
    <scope>FUNCTION</scope>
</reference>
<reference key="5">
    <citation type="journal article" date="2007" name="Genetics">
        <title>Genetic evidence for a SPO1-dependent signaling pathway controlling meiotic progression in yeast.</title>
        <authorList>
            <person name="Tevzadze G.G."/>
            <person name="Pierce J.V."/>
            <person name="Esposito R.E."/>
        </authorList>
    </citation>
    <scope>INTERACTION WITH SPO1</scope>
    <scope>DISRUPTION PHENOTYPE</scope>
</reference>
<feature type="chain" id="PRO_0000202524" description="Sporulation protein 23">
    <location>
        <begin position="1"/>
        <end position="523"/>
    </location>
</feature>
<keyword id="KW-0469">Meiosis</keyword>
<keyword id="KW-1185">Reference proteome</keyword>
<keyword id="KW-0749">Sporulation</keyword>
<protein>
    <recommendedName>
        <fullName>Sporulation protein 23</fullName>
    </recommendedName>
</protein>
<sequence length="523" mass="59919">MLFSSSSSSLNSEVSQVFSENISSRSTTLTESSTQSEIRQHFGNEDFSGELPKKLIQLKKLKNGGTTIKKAKEDLEYCYDSLRLYENPYVTSSVDKKCGYSIELYLDNKYKTLMFSDLQLNADYPLYYDSSLDNISTNVERERATPLQIKGKIRINIDREDQALLITSHSISLKCFTKEYACFVNSETSKNSYSDKIIKELNHTEFFESSTYPKQQLRVIHHSLNDKKILLTKGTYDYPFTFTLQANTFPASFSSFFGKTHFRIESLTTIMRIPSKPKNLLKFLKNESFTDKIILTEEIKVKRVLPSTSMLKFETFQLRSYNTASEIVVSVIGNSKLIEIGMPFQMILSITKTDSSIELQEASLAVAQRMAIPSIDLKTKKILREPYIKKSEYLLRTVESQSFDSDKTIFGFCFDDVVIPTYADGLPSWFKTFYCEPSSFYPNHAALKVTHLLLFRITYSRNELVEGLEMKKNYRITVNFPILVGDSDISTSSLLPKYEKFENISDLQDEPPLYSMVAGENSL</sequence>